<reference key="1">
    <citation type="submission" date="2005-10" db="EMBL/GenBank/DDBJ databases">
        <title>Complete sequence of chromosome 1 of Burkholderia sp. 383.</title>
        <authorList>
            <consortium name="US DOE Joint Genome Institute"/>
            <person name="Copeland A."/>
            <person name="Lucas S."/>
            <person name="Lapidus A."/>
            <person name="Barry K."/>
            <person name="Detter J.C."/>
            <person name="Glavina T."/>
            <person name="Hammon N."/>
            <person name="Israni S."/>
            <person name="Pitluck S."/>
            <person name="Chain P."/>
            <person name="Malfatti S."/>
            <person name="Shin M."/>
            <person name="Vergez L."/>
            <person name="Schmutz J."/>
            <person name="Larimer F."/>
            <person name="Land M."/>
            <person name="Kyrpides N."/>
            <person name="Lykidis A."/>
            <person name="Richardson P."/>
        </authorList>
    </citation>
    <scope>NUCLEOTIDE SEQUENCE [LARGE SCALE GENOMIC DNA]</scope>
    <source>
        <strain>ATCC 17760 / DSM 23089 / LMG 22485 / NCIMB 9086 / R18194 / 383</strain>
    </source>
</reference>
<protein>
    <recommendedName>
        <fullName evidence="1">UDP-3-O-acylglucosamine N-acyltransferase</fullName>
        <ecNumber evidence="1">2.3.1.191</ecNumber>
    </recommendedName>
</protein>
<sequence>MALTLEELVKRFGGEIAGDAQCKVGGLAPLDQAGPQQLAFLANPKYLSQVESTRAGAVLIAPKDLEKLGAAAGGRNFIVTPNPYAYFARVAQMFIDLATPQRAAGVHPSATIDPAAQVAASAVIGPHVTVEAGAVIEDGVQLDANVFVGRGTTIGAGSHLYPNASVYHGCKVGPRAIIHAGAVIGSDGFGFAPDFVGDGDARTGSWVKIPQVGGVTIGPDVEIGANTTIDRGAMADTVIEECVKIDNQVQIGHNCRIGAYTVIAGSAGIAGSTTIGRHCMIGGAAGIAGHVTLGDYVIITAKSGVSKSLPKAGIYTSAFPAVDHGEWNKSAALVRNLDKLRERIKALEAALAAQGGTDA</sequence>
<gene>
    <name evidence="1" type="primary">lpxD</name>
    <name type="ordered locus">Bcep18194_A5319</name>
</gene>
<proteinExistence type="inferred from homology"/>
<accession>Q39F53</accession>
<dbReference type="EC" id="2.3.1.191" evidence="1"/>
<dbReference type="EMBL" id="CP000151">
    <property type="protein sequence ID" value="ABB08913.1"/>
    <property type="molecule type" value="Genomic_DNA"/>
</dbReference>
<dbReference type="RefSeq" id="WP_011352451.1">
    <property type="nucleotide sequence ID" value="NC_007510.1"/>
</dbReference>
<dbReference type="SMR" id="Q39F53"/>
<dbReference type="GeneID" id="45095195"/>
<dbReference type="KEGG" id="bur:Bcep18194_A5319"/>
<dbReference type="PATRIC" id="fig|482957.22.peg.2268"/>
<dbReference type="HOGENOM" id="CLU_049865_0_0_4"/>
<dbReference type="UniPathway" id="UPA00973"/>
<dbReference type="Proteomes" id="UP000002705">
    <property type="component" value="Chromosome 1"/>
</dbReference>
<dbReference type="GO" id="GO:0016020">
    <property type="term" value="C:membrane"/>
    <property type="evidence" value="ECO:0007669"/>
    <property type="project" value="GOC"/>
</dbReference>
<dbReference type="GO" id="GO:0016410">
    <property type="term" value="F:N-acyltransferase activity"/>
    <property type="evidence" value="ECO:0007669"/>
    <property type="project" value="InterPro"/>
</dbReference>
<dbReference type="GO" id="GO:0009245">
    <property type="term" value="P:lipid A biosynthetic process"/>
    <property type="evidence" value="ECO:0007669"/>
    <property type="project" value="UniProtKB-UniRule"/>
</dbReference>
<dbReference type="CDD" id="cd03352">
    <property type="entry name" value="LbH_LpxD"/>
    <property type="match status" value="1"/>
</dbReference>
<dbReference type="Gene3D" id="1.20.5.170">
    <property type="match status" value="1"/>
</dbReference>
<dbReference type="Gene3D" id="2.160.10.10">
    <property type="entry name" value="Hexapeptide repeat proteins"/>
    <property type="match status" value="1"/>
</dbReference>
<dbReference type="Gene3D" id="3.40.1390.10">
    <property type="entry name" value="MurE/MurF, N-terminal domain"/>
    <property type="match status" value="1"/>
</dbReference>
<dbReference type="HAMAP" id="MF_00523">
    <property type="entry name" value="LpxD"/>
    <property type="match status" value="1"/>
</dbReference>
<dbReference type="InterPro" id="IPR001451">
    <property type="entry name" value="Hexapep"/>
</dbReference>
<dbReference type="InterPro" id="IPR018357">
    <property type="entry name" value="Hexapep_transf_CS"/>
</dbReference>
<dbReference type="InterPro" id="IPR007691">
    <property type="entry name" value="LpxD"/>
</dbReference>
<dbReference type="InterPro" id="IPR011004">
    <property type="entry name" value="Trimer_LpxA-like_sf"/>
</dbReference>
<dbReference type="InterPro" id="IPR020573">
    <property type="entry name" value="UDP_GlcNAc_AcTrfase_non-rep"/>
</dbReference>
<dbReference type="NCBIfam" id="TIGR01853">
    <property type="entry name" value="lipid_A_lpxD"/>
    <property type="match status" value="1"/>
</dbReference>
<dbReference type="NCBIfam" id="NF002060">
    <property type="entry name" value="PRK00892.1"/>
    <property type="match status" value="1"/>
</dbReference>
<dbReference type="PANTHER" id="PTHR43378">
    <property type="entry name" value="UDP-3-O-ACYLGLUCOSAMINE N-ACYLTRANSFERASE"/>
    <property type="match status" value="1"/>
</dbReference>
<dbReference type="PANTHER" id="PTHR43378:SF2">
    <property type="entry name" value="UDP-3-O-ACYLGLUCOSAMINE N-ACYLTRANSFERASE 1, MITOCHONDRIAL-RELATED"/>
    <property type="match status" value="1"/>
</dbReference>
<dbReference type="Pfam" id="PF00132">
    <property type="entry name" value="Hexapep"/>
    <property type="match status" value="2"/>
</dbReference>
<dbReference type="Pfam" id="PF14602">
    <property type="entry name" value="Hexapep_2"/>
    <property type="match status" value="1"/>
</dbReference>
<dbReference type="Pfam" id="PF04613">
    <property type="entry name" value="LpxD"/>
    <property type="match status" value="1"/>
</dbReference>
<dbReference type="SUPFAM" id="SSF51161">
    <property type="entry name" value="Trimeric LpxA-like enzymes"/>
    <property type="match status" value="1"/>
</dbReference>
<dbReference type="PROSITE" id="PS00101">
    <property type="entry name" value="HEXAPEP_TRANSFERASES"/>
    <property type="match status" value="3"/>
</dbReference>
<keyword id="KW-0012">Acyltransferase</keyword>
<keyword id="KW-0441">Lipid A biosynthesis</keyword>
<keyword id="KW-0444">Lipid biosynthesis</keyword>
<keyword id="KW-0443">Lipid metabolism</keyword>
<keyword id="KW-0677">Repeat</keyword>
<keyword id="KW-0808">Transferase</keyword>
<organism>
    <name type="scientific">Burkholderia lata (strain ATCC 17760 / DSM 23089 / LMG 22485 / NCIMB 9086 / R18194 / 383)</name>
    <dbReference type="NCBI Taxonomy" id="482957"/>
    <lineage>
        <taxon>Bacteria</taxon>
        <taxon>Pseudomonadati</taxon>
        <taxon>Pseudomonadota</taxon>
        <taxon>Betaproteobacteria</taxon>
        <taxon>Burkholderiales</taxon>
        <taxon>Burkholderiaceae</taxon>
        <taxon>Burkholderia</taxon>
        <taxon>Burkholderia cepacia complex</taxon>
    </lineage>
</organism>
<feature type="chain" id="PRO_0000264352" description="UDP-3-O-acylglucosamine N-acyltransferase">
    <location>
        <begin position="1"/>
        <end position="359"/>
    </location>
</feature>
<feature type="active site" description="Proton acceptor" evidence="1">
    <location>
        <position position="253"/>
    </location>
</feature>
<evidence type="ECO:0000255" key="1">
    <source>
        <dbReference type="HAMAP-Rule" id="MF_00523"/>
    </source>
</evidence>
<name>LPXD_BURL3</name>
<comment type="function">
    <text evidence="1">Catalyzes the N-acylation of UDP-3-O-acylglucosamine using 3-hydroxyacyl-ACP as the acyl donor. Is involved in the biosynthesis of lipid A, a phosphorylated glycolipid that anchors the lipopolysaccharide to the outer membrane of the cell.</text>
</comment>
<comment type="catalytic activity">
    <reaction evidence="1">
        <text>a UDP-3-O-[(3R)-3-hydroxyacyl]-alpha-D-glucosamine + a (3R)-hydroxyacyl-[ACP] = a UDP-2-N,3-O-bis[(3R)-3-hydroxyacyl]-alpha-D-glucosamine + holo-[ACP] + H(+)</text>
        <dbReference type="Rhea" id="RHEA:53836"/>
        <dbReference type="Rhea" id="RHEA-COMP:9685"/>
        <dbReference type="Rhea" id="RHEA-COMP:9945"/>
        <dbReference type="ChEBI" id="CHEBI:15378"/>
        <dbReference type="ChEBI" id="CHEBI:64479"/>
        <dbReference type="ChEBI" id="CHEBI:78827"/>
        <dbReference type="ChEBI" id="CHEBI:137740"/>
        <dbReference type="ChEBI" id="CHEBI:137748"/>
        <dbReference type="EC" id="2.3.1.191"/>
    </reaction>
</comment>
<comment type="pathway">
    <text evidence="1">Bacterial outer membrane biogenesis; LPS lipid A biosynthesis.</text>
</comment>
<comment type="subunit">
    <text evidence="1">Homotrimer.</text>
</comment>
<comment type="similarity">
    <text evidence="1">Belongs to the transferase hexapeptide repeat family. LpxD subfamily.</text>
</comment>